<comment type="similarity">
    <text evidence="1">Belongs to the UPF0102 family.</text>
</comment>
<accession>A5U6Q3</accession>
<sequence>MTTLKTMTRVQLGAMGEALAVDYLTSMGLRILNRNWRCRYGELDVIACDAATRTVVFVEVKTRTGDGYGGLAHAVTERKVRRLRRLAGLWLADQEERWAAVRIDVIGVRVGPKNSGRTPELTHLQGIG</sequence>
<keyword id="KW-1185">Reference proteome</keyword>
<reference key="1">
    <citation type="journal article" date="2008" name="PLoS ONE">
        <title>Genetic basis of virulence attenuation revealed by comparative genomic analysis of Mycobacterium tuberculosis strain H37Ra versus H37Rv.</title>
        <authorList>
            <person name="Zheng H."/>
            <person name="Lu L."/>
            <person name="Wang B."/>
            <person name="Pu S."/>
            <person name="Zhang X."/>
            <person name="Zhu G."/>
            <person name="Shi W."/>
            <person name="Zhang L."/>
            <person name="Wang H."/>
            <person name="Wang S."/>
            <person name="Zhao G."/>
            <person name="Zhang Y."/>
        </authorList>
    </citation>
    <scope>NUCLEOTIDE SEQUENCE [LARGE SCALE GENOMIC DNA]</scope>
    <source>
        <strain>ATCC 25177 / H37Ra</strain>
    </source>
</reference>
<evidence type="ECO:0000255" key="1">
    <source>
        <dbReference type="HAMAP-Rule" id="MF_00048"/>
    </source>
</evidence>
<dbReference type="EMBL" id="CP000611">
    <property type="protein sequence ID" value="ABQ74703.1"/>
    <property type="molecule type" value="Genomic_DNA"/>
</dbReference>
<dbReference type="RefSeq" id="WP_003414702.1">
    <property type="nucleotide sequence ID" value="NZ_CP016972.1"/>
</dbReference>
<dbReference type="SMR" id="A5U6Q3"/>
<dbReference type="KEGG" id="mra:MRA_2923"/>
<dbReference type="eggNOG" id="COG0792">
    <property type="taxonomic scope" value="Bacteria"/>
</dbReference>
<dbReference type="HOGENOM" id="CLU_115353_2_3_11"/>
<dbReference type="Proteomes" id="UP000001988">
    <property type="component" value="Chromosome"/>
</dbReference>
<dbReference type="GO" id="GO:0003676">
    <property type="term" value="F:nucleic acid binding"/>
    <property type="evidence" value="ECO:0007669"/>
    <property type="project" value="InterPro"/>
</dbReference>
<dbReference type="CDD" id="cd20736">
    <property type="entry name" value="PoNe_Nuclease"/>
    <property type="match status" value="1"/>
</dbReference>
<dbReference type="Gene3D" id="3.40.1350.10">
    <property type="match status" value="1"/>
</dbReference>
<dbReference type="HAMAP" id="MF_00048">
    <property type="entry name" value="UPF0102"/>
    <property type="match status" value="1"/>
</dbReference>
<dbReference type="InterPro" id="IPR011335">
    <property type="entry name" value="Restrct_endonuc-II-like"/>
</dbReference>
<dbReference type="InterPro" id="IPR011856">
    <property type="entry name" value="tRNA_endonuc-like_dom_sf"/>
</dbReference>
<dbReference type="InterPro" id="IPR003509">
    <property type="entry name" value="UPF0102_YraN-like"/>
</dbReference>
<dbReference type="NCBIfam" id="NF009150">
    <property type="entry name" value="PRK12497.1-3"/>
    <property type="match status" value="1"/>
</dbReference>
<dbReference type="NCBIfam" id="NF009153">
    <property type="entry name" value="PRK12497.3-1"/>
    <property type="match status" value="1"/>
</dbReference>
<dbReference type="NCBIfam" id="NF009154">
    <property type="entry name" value="PRK12497.3-3"/>
    <property type="match status" value="1"/>
</dbReference>
<dbReference type="NCBIfam" id="TIGR00252">
    <property type="entry name" value="YraN family protein"/>
    <property type="match status" value="1"/>
</dbReference>
<dbReference type="PANTHER" id="PTHR34039">
    <property type="entry name" value="UPF0102 PROTEIN YRAN"/>
    <property type="match status" value="1"/>
</dbReference>
<dbReference type="PANTHER" id="PTHR34039:SF1">
    <property type="entry name" value="UPF0102 PROTEIN YRAN"/>
    <property type="match status" value="1"/>
</dbReference>
<dbReference type="Pfam" id="PF02021">
    <property type="entry name" value="UPF0102"/>
    <property type="match status" value="1"/>
</dbReference>
<dbReference type="SUPFAM" id="SSF52980">
    <property type="entry name" value="Restriction endonuclease-like"/>
    <property type="match status" value="1"/>
</dbReference>
<organism>
    <name type="scientific">Mycobacterium tuberculosis (strain ATCC 25177 / H37Ra)</name>
    <dbReference type="NCBI Taxonomy" id="419947"/>
    <lineage>
        <taxon>Bacteria</taxon>
        <taxon>Bacillati</taxon>
        <taxon>Actinomycetota</taxon>
        <taxon>Actinomycetes</taxon>
        <taxon>Mycobacteriales</taxon>
        <taxon>Mycobacteriaceae</taxon>
        <taxon>Mycobacterium</taxon>
        <taxon>Mycobacterium tuberculosis complex</taxon>
    </lineage>
</organism>
<proteinExistence type="inferred from homology"/>
<feature type="chain" id="PRO_1000009235" description="UPF0102 protein MRA_2923">
    <location>
        <begin position="1"/>
        <end position="128"/>
    </location>
</feature>
<gene>
    <name type="ordered locus">MRA_2923</name>
</gene>
<name>Y2923_MYCTA</name>
<protein>
    <recommendedName>
        <fullName evidence="1">UPF0102 protein MRA_2923</fullName>
    </recommendedName>
</protein>